<organism evidence="4">
    <name type="scientific">Melicytus chathamicus</name>
    <name type="common">Chatham Island mahoe</name>
    <name type="synonym">Hymenanthera latifolia var. chathamica</name>
    <dbReference type="NCBI Taxonomy" id="453349"/>
    <lineage>
        <taxon>Eukaryota</taxon>
        <taxon>Viridiplantae</taxon>
        <taxon>Streptophyta</taxon>
        <taxon>Embryophyta</taxon>
        <taxon>Tracheophyta</taxon>
        <taxon>Spermatophyta</taxon>
        <taxon>Magnoliopsida</taxon>
        <taxon>eudicotyledons</taxon>
        <taxon>Gunneridae</taxon>
        <taxon>Pentapetalae</taxon>
        <taxon>rosids</taxon>
        <taxon>fabids</taxon>
        <taxon>Malpighiales</taxon>
        <taxon>Violaceae</taxon>
        <taxon>Melicytus</taxon>
    </lineage>
</organism>
<protein>
    <recommendedName>
        <fullName evidence="4">Cyclotide mech-1</fullName>
    </recommendedName>
</protein>
<comment type="function">
    <text evidence="1 2 3">Probably participates in a plant defense mechanism (Potential). Binds to and induces leakage in phospholipd membranes, particularly ones containing 1-palmitoyl-2-oleophosphatidylethanolamine (POPE) (By similarity). Not active against Gram-negative bacterium E.coli ATCC 25922 or Gram-positive bacterium S.aureus ATCC 25923 up to a concentration of 64 uM (PubMed:26322745).</text>
</comment>
<comment type="domain">
    <text evidence="5">The presence of a 'disulfide through disulfide knot' structurally defines this protein as a knottin.</text>
</comment>
<comment type="PTM">
    <text evidence="2">This is a cyclic peptide.</text>
</comment>
<comment type="PTM">
    <text evidence="3">Contains 3 disulfide bonds.</text>
</comment>
<comment type="mass spectrometry" mass="3309.54" method="Electrospray" evidence="3"/>
<comment type="similarity">
    <text evidence="2">Belongs to the cyclotide family. Bracelet subfamily.</text>
</comment>
<comment type="caution">
    <text evidence="2">This peptide is cyclic. The start position was chosen by similarity to Oak1 (kalata B1) for which the DNA sequence is known.</text>
</comment>
<keyword id="KW-0903">Direct protein sequencing</keyword>
<keyword id="KW-1015">Disulfide bond</keyword>
<keyword id="KW-0960">Knottin</keyword>
<keyword id="KW-0611">Plant defense</keyword>
<sequence length="30" mass="3336">GVIPCGESCVFIPCINKKKCSCKNKVCYRD</sequence>
<feature type="peptide" id="PRO_0000437514" description="Cyclotide mech-1" evidence="2 3">
    <location>
        <begin position="1"/>
        <end position="30"/>
    </location>
</feature>
<feature type="disulfide bond" evidence="2">
    <location>
        <begin position="5"/>
        <end position="20"/>
    </location>
</feature>
<feature type="disulfide bond" evidence="2">
    <location>
        <begin position="9"/>
        <end position="22"/>
    </location>
</feature>
<feature type="disulfide bond" evidence="2">
    <location>
        <begin position="14"/>
        <end position="27"/>
    </location>
</feature>
<feature type="cross-link" description="Cyclopeptide (Gly-Asp)" evidence="6">
    <location>
        <begin position="1"/>
        <end position="30"/>
    </location>
</feature>
<feature type="unsure residue" description="I or L" evidence="3">
    <location>
        <position position="3"/>
    </location>
</feature>
<feature type="unsure residue" description="I or L" evidence="3">
    <location>
        <position position="12"/>
    </location>
</feature>
<feature type="unsure residue" description="I or L" evidence="3">
    <location>
        <position position="15"/>
    </location>
</feature>
<evidence type="ECO:0000250" key="1">
    <source>
        <dbReference type="UniProtKB" id="C0HK36"/>
    </source>
</evidence>
<evidence type="ECO:0000255" key="2">
    <source>
        <dbReference type="PROSITE-ProRule" id="PRU00395"/>
    </source>
</evidence>
<evidence type="ECO:0000269" key="3">
    <source>
    </source>
</evidence>
<evidence type="ECO:0000303" key="4">
    <source>
    </source>
</evidence>
<evidence type="ECO:0000305" key="5"/>
<evidence type="ECO:0000305" key="6">
    <source>
    </source>
</evidence>
<proteinExistence type="evidence at protein level"/>
<reference evidence="5" key="1">
    <citation type="journal article" date="2015" name="ACS Chem. Biol.">
        <title>Lysine-rich cyclotides: a new subclass of circular knotted proteins from Violaceae.</title>
        <authorList>
            <person name="Ravipati A.S."/>
            <person name="Henriques S.T."/>
            <person name="Poth A.G."/>
            <person name="Kaas Q."/>
            <person name="Wang C.K."/>
            <person name="Colgrave M.L."/>
            <person name="Craik D.J."/>
        </authorList>
    </citation>
    <scope>PROTEIN SEQUENCE</scope>
    <scope>FUNCTION</scope>
    <scope>MASS SPECTROMETRY</scope>
    <scope>IDENTIFICATION BY MASS SPECTROMETRY</scope>
    <scope>PRESENCE OF DISULFIDE BONDS</scope>
</reference>
<dbReference type="SMR" id="C0HK35"/>
<dbReference type="GO" id="GO:0006952">
    <property type="term" value="P:defense response"/>
    <property type="evidence" value="ECO:0007669"/>
    <property type="project" value="UniProtKB-KW"/>
</dbReference>
<dbReference type="InterPro" id="IPR005535">
    <property type="entry name" value="Cyclotide"/>
</dbReference>
<dbReference type="InterPro" id="IPR012323">
    <property type="entry name" value="Cyclotide_bracelet_CS"/>
</dbReference>
<dbReference type="InterPro" id="IPR036146">
    <property type="entry name" value="Cyclotide_sf"/>
</dbReference>
<dbReference type="Pfam" id="PF03784">
    <property type="entry name" value="Cyclotide"/>
    <property type="match status" value="1"/>
</dbReference>
<dbReference type="PIRSF" id="PIRSF037891">
    <property type="entry name" value="Cycloviolacin"/>
    <property type="match status" value="1"/>
</dbReference>
<dbReference type="SUPFAM" id="SSF57038">
    <property type="entry name" value="Cyclotides"/>
    <property type="match status" value="1"/>
</dbReference>
<dbReference type="PROSITE" id="PS51052">
    <property type="entry name" value="CYCLOTIDE"/>
    <property type="match status" value="1"/>
</dbReference>
<dbReference type="PROSITE" id="PS60008">
    <property type="entry name" value="CYCLOTIDE_BRACELET"/>
    <property type="match status" value="1"/>
</dbReference>
<accession>C0HK35</accession>
<name>CYMC1_MELCT</name>